<proteinExistence type="inferred from homology"/>
<reference key="1">
    <citation type="journal article" date="1998" name="Science">
        <title>Genome sequence of the nematode C. elegans: a platform for investigating biology.</title>
        <authorList>
            <consortium name="The C. elegans sequencing consortium"/>
        </authorList>
    </citation>
    <scope>NUCLEOTIDE SEQUENCE [LARGE SCALE GENOMIC DNA]</scope>
    <source>
        <strain>Bristol N2</strain>
    </source>
</reference>
<accession>P91529</accession>
<evidence type="ECO:0000250" key="1"/>
<evidence type="ECO:0000305" key="2"/>
<sequence length="296" mass="32755">MASIKEELISAAESESQVMQIVQAALEGIDMDALTSMTPGLPQTVRQTAINSLLSSKKLAIQQAPGGVLRLKVNTSEQIAGTEEEQVIYSLIEESKTRGIWIKELREGSGLNQLQLRKTLKSLETKKLIKTIKAVGTTRKCYILFSIEPDMSLTGGTFYSDQQLDSELINTLISVCGSYAASRRKHAIDENPNNIQMQREASYIRPQEIAQFITEKRVLNVPLSLEDLERILEVAVLDGTIERRADGKIRACPPRSSISPLVSVPCAICPVVEDCRPGYVISPQSCDYMKNWLADL</sequence>
<organism>
    <name type="scientific">Caenorhabditis elegans</name>
    <dbReference type="NCBI Taxonomy" id="6239"/>
    <lineage>
        <taxon>Eukaryota</taxon>
        <taxon>Metazoa</taxon>
        <taxon>Ecdysozoa</taxon>
        <taxon>Nematoda</taxon>
        <taxon>Chromadorea</taxon>
        <taxon>Rhabditida</taxon>
        <taxon>Rhabditina</taxon>
        <taxon>Rhabditomorpha</taxon>
        <taxon>Rhabditoidea</taxon>
        <taxon>Rhabditidae</taxon>
        <taxon>Peloderinae</taxon>
        <taxon>Caenorhabditis</taxon>
    </lineage>
</organism>
<feature type="chain" id="PRO_0000073974" description="Probable DNA-directed RNA polymerase III subunit RPC6">
    <location>
        <begin position="1"/>
        <end position="296"/>
    </location>
</feature>
<keyword id="KW-0240">DNA-directed RNA polymerase</keyword>
<keyword id="KW-0539">Nucleus</keyword>
<keyword id="KW-1185">Reference proteome</keyword>
<keyword id="KW-0804">Transcription</keyword>
<name>RPC6_CAEEL</name>
<comment type="function">
    <text>DNA-dependent RNA polymerase catalyzes the transcription of DNA into RNA using the four ribonucleoside triphosphates as substrates. Specific peripheric component of RNA polymerase III which synthesizes small RNAs, such as 5S rRNA and tRNAs.</text>
</comment>
<comment type="subcellular location">
    <subcellularLocation>
        <location evidence="1">Nucleus</location>
    </subcellularLocation>
</comment>
<comment type="similarity">
    <text evidence="2">Belongs to the eukaryotic RPC34/RPC39 RNA polymerase subunit family.</text>
</comment>
<dbReference type="EMBL" id="FO080504">
    <property type="protein sequence ID" value="CCD64234.1"/>
    <property type="molecule type" value="Genomic_DNA"/>
</dbReference>
<dbReference type="PIR" id="T34460">
    <property type="entry name" value="T34460"/>
</dbReference>
<dbReference type="RefSeq" id="NP_491427.1">
    <property type="nucleotide sequence ID" value="NM_059026.6"/>
</dbReference>
<dbReference type="SMR" id="P91529"/>
<dbReference type="BioGRID" id="37544">
    <property type="interactions" value="11"/>
</dbReference>
<dbReference type="ComplexPortal" id="CPX-2812">
    <property type="entry name" value="DNA-directed RNA polymerase III complex"/>
</dbReference>
<dbReference type="FunCoup" id="P91529">
    <property type="interactions" value="2720"/>
</dbReference>
<dbReference type="IntAct" id="P91529">
    <property type="interactions" value="1"/>
</dbReference>
<dbReference type="STRING" id="6239.W09C3.4.1"/>
<dbReference type="PaxDb" id="6239-W09C3.4"/>
<dbReference type="PeptideAtlas" id="P91529"/>
<dbReference type="EnsemblMetazoa" id="W09C3.4.1">
    <property type="protein sequence ID" value="W09C3.4.1"/>
    <property type="gene ID" value="WBGene00021112"/>
</dbReference>
<dbReference type="GeneID" id="172081"/>
<dbReference type="KEGG" id="cel:CELE_W09C3.4"/>
<dbReference type="UCSC" id="W09C3.4">
    <property type="organism name" value="c. elegans"/>
</dbReference>
<dbReference type="AGR" id="WB:WBGene00021112"/>
<dbReference type="CTD" id="172081"/>
<dbReference type="WormBase" id="W09C3.4">
    <property type="protein sequence ID" value="CE14750"/>
    <property type="gene ID" value="WBGene00021112"/>
</dbReference>
<dbReference type="eggNOG" id="KOG3233">
    <property type="taxonomic scope" value="Eukaryota"/>
</dbReference>
<dbReference type="GeneTree" id="ENSGT00390000009679"/>
<dbReference type="HOGENOM" id="CLU_033661_1_0_1"/>
<dbReference type="InParanoid" id="P91529"/>
<dbReference type="OMA" id="VGTTKKC"/>
<dbReference type="OrthoDB" id="613763at2759"/>
<dbReference type="PhylomeDB" id="P91529"/>
<dbReference type="PRO" id="PR:P91529"/>
<dbReference type="Proteomes" id="UP000001940">
    <property type="component" value="Chromosome I"/>
</dbReference>
<dbReference type="Bgee" id="WBGene00021112">
    <property type="expression patterns" value="Expressed in germ line (C elegans) and 4 other cell types or tissues"/>
</dbReference>
<dbReference type="GO" id="GO:0005666">
    <property type="term" value="C:RNA polymerase III complex"/>
    <property type="evidence" value="ECO:0000318"/>
    <property type="project" value="GO_Central"/>
</dbReference>
<dbReference type="GO" id="GO:0006383">
    <property type="term" value="P:transcription by RNA polymerase III"/>
    <property type="evidence" value="ECO:0007669"/>
    <property type="project" value="InterPro"/>
</dbReference>
<dbReference type="FunFam" id="1.10.10.10:FF:000116">
    <property type="entry name" value="DNA-directed RNA polymerase III subunit RPC6"/>
    <property type="match status" value="1"/>
</dbReference>
<dbReference type="FunFam" id="1.10.10.10:FF:000237">
    <property type="entry name" value="DNA-directed RNA polymerase III subunit RPC6"/>
    <property type="match status" value="1"/>
</dbReference>
<dbReference type="Gene3D" id="1.10.10.10">
    <property type="entry name" value="Winged helix-like DNA-binding domain superfamily/Winged helix DNA-binding domain"/>
    <property type="match status" value="2"/>
</dbReference>
<dbReference type="InterPro" id="IPR007832">
    <property type="entry name" value="RNA_pol_Rpc34"/>
</dbReference>
<dbReference type="InterPro" id="IPR016049">
    <property type="entry name" value="RNA_pol_Rpc34-like"/>
</dbReference>
<dbReference type="InterPro" id="IPR036388">
    <property type="entry name" value="WH-like_DNA-bd_sf"/>
</dbReference>
<dbReference type="InterPro" id="IPR036390">
    <property type="entry name" value="WH_DNA-bd_sf"/>
</dbReference>
<dbReference type="PANTHER" id="PTHR12780">
    <property type="entry name" value="RNA POLYMERASE III DNA DIRECTED , 39KD SUBUNIT-RELATED"/>
    <property type="match status" value="1"/>
</dbReference>
<dbReference type="Pfam" id="PF05158">
    <property type="entry name" value="RNA_pol_Rpc34"/>
    <property type="match status" value="1"/>
</dbReference>
<dbReference type="PIRSF" id="PIRSF028763">
    <property type="entry name" value="RNA_pol_Rpc34"/>
    <property type="match status" value="1"/>
</dbReference>
<dbReference type="SUPFAM" id="SSF46785">
    <property type="entry name" value="Winged helix' DNA-binding domain"/>
    <property type="match status" value="1"/>
</dbReference>
<protein>
    <recommendedName>
        <fullName>Probable DNA-directed RNA polymerase III subunit RPC6</fullName>
        <shortName>RNA polymerase III subunit C6</shortName>
    </recommendedName>
    <alternativeName>
        <fullName>DNA-directed RNA polymerase III subunit F</fullName>
    </alternativeName>
</protein>
<gene>
    <name type="ORF">W09C3.4</name>
</gene>